<sequence>MKKKRRLFIRTGILLVLICALGYTIYNAVFAGKESISEGSDAPNFVLEDTNGKRIELSDLKGKGVFLNFWGTWCEPCKKEFPYMANQYKHFKSQGVEIVAVNVGESKIAVHNFMKSYGVNFPVVLDTDRQVLDAYDVSPLPTTFLINPEGKVVKVVTGTMTESMIHDYMNLIKPGETSG</sequence>
<proteinExistence type="evidence at protein level"/>
<dbReference type="EMBL" id="L09228">
    <property type="protein sequence ID" value="AAA67494.1"/>
    <property type="status" value="ALT_FRAME"/>
    <property type="molecule type" value="Genomic_DNA"/>
</dbReference>
<dbReference type="EMBL" id="AL009126">
    <property type="protein sequence ID" value="CAB14247.2"/>
    <property type="molecule type" value="Genomic_DNA"/>
</dbReference>
<dbReference type="PIR" id="S45556">
    <property type="entry name" value="S45556"/>
</dbReference>
<dbReference type="RefSeq" id="NP_390196.2">
    <property type="nucleotide sequence ID" value="NC_000964.3"/>
</dbReference>
<dbReference type="RefSeq" id="WP_003230513.1">
    <property type="nucleotide sequence ID" value="NZ_OZ025638.1"/>
</dbReference>
<dbReference type="PDB" id="1ST9">
    <property type="method" value="X-ray"/>
    <property type="resolution" value="1.50 A"/>
    <property type="chains" value="A/B=37-179"/>
</dbReference>
<dbReference type="PDB" id="1SU9">
    <property type="method" value="X-ray"/>
    <property type="resolution" value="1.95 A"/>
    <property type="chains" value="A/B=37-179"/>
</dbReference>
<dbReference type="PDB" id="2F9S">
    <property type="method" value="X-ray"/>
    <property type="resolution" value="1.40 A"/>
    <property type="chains" value="A/B=37-179"/>
</dbReference>
<dbReference type="PDB" id="2H19">
    <property type="method" value="X-ray"/>
    <property type="resolution" value="2.00 A"/>
    <property type="chains" value="A/B=37-179"/>
</dbReference>
<dbReference type="PDB" id="2H1A">
    <property type="method" value="X-ray"/>
    <property type="resolution" value="2.40 A"/>
    <property type="chains" value="A/B=37-179"/>
</dbReference>
<dbReference type="PDB" id="2H1B">
    <property type="method" value="X-ray"/>
    <property type="resolution" value="1.95 A"/>
    <property type="chains" value="A/B/C/D=37-179"/>
</dbReference>
<dbReference type="PDB" id="2H1D">
    <property type="method" value="X-ray"/>
    <property type="resolution" value="2.60 A"/>
    <property type="chains" value="A/B=37-179"/>
</dbReference>
<dbReference type="PDB" id="2H1G">
    <property type="method" value="X-ray"/>
    <property type="resolution" value="3.10 A"/>
    <property type="chains" value="A/B=37-179"/>
</dbReference>
<dbReference type="PDB" id="3C71">
    <property type="method" value="X-ray"/>
    <property type="resolution" value="1.90 A"/>
    <property type="chains" value="A=37-179"/>
</dbReference>
<dbReference type="PDB" id="3C73">
    <property type="method" value="X-ray"/>
    <property type="resolution" value="2.50 A"/>
    <property type="chains" value="A/B=40-179"/>
</dbReference>
<dbReference type="PDBsum" id="1ST9"/>
<dbReference type="PDBsum" id="1SU9"/>
<dbReference type="PDBsum" id="2F9S"/>
<dbReference type="PDBsum" id="2H19"/>
<dbReference type="PDBsum" id="2H1A"/>
<dbReference type="PDBsum" id="2H1B"/>
<dbReference type="PDBsum" id="2H1D"/>
<dbReference type="PDBsum" id="2H1G"/>
<dbReference type="PDBsum" id="3C71"/>
<dbReference type="PDBsum" id="3C73"/>
<dbReference type="SMR" id="P35160"/>
<dbReference type="DIP" id="DIP-61132N"/>
<dbReference type="FunCoup" id="P35160">
    <property type="interactions" value="241"/>
</dbReference>
<dbReference type="IntAct" id="P35160">
    <property type="interactions" value="1"/>
</dbReference>
<dbReference type="STRING" id="224308.BSU23150"/>
<dbReference type="PaxDb" id="224308-BSU23150"/>
<dbReference type="EnsemblBacteria" id="CAB14247">
    <property type="protein sequence ID" value="CAB14247"/>
    <property type="gene ID" value="BSU_23150"/>
</dbReference>
<dbReference type="GeneID" id="938958"/>
<dbReference type="KEGG" id="bsu:BSU23150"/>
<dbReference type="PATRIC" id="fig|224308.179.peg.2522"/>
<dbReference type="eggNOG" id="COG0526">
    <property type="taxonomic scope" value="Bacteria"/>
</dbReference>
<dbReference type="InParanoid" id="P35160"/>
<dbReference type="OrthoDB" id="25753at2"/>
<dbReference type="PhylomeDB" id="P35160"/>
<dbReference type="BioCyc" id="BSUB:BSU23150-MONOMER"/>
<dbReference type="BioCyc" id="MetaCyc:BSU23150-MONOMER"/>
<dbReference type="UniPathway" id="UPA00555"/>
<dbReference type="EvolutionaryTrace" id="P35160"/>
<dbReference type="Proteomes" id="UP000001570">
    <property type="component" value="Chromosome"/>
</dbReference>
<dbReference type="GO" id="GO:0005886">
    <property type="term" value="C:plasma membrane"/>
    <property type="evidence" value="ECO:0007669"/>
    <property type="project" value="UniProtKB-SubCell"/>
</dbReference>
<dbReference type="GO" id="GO:0016209">
    <property type="term" value="F:antioxidant activity"/>
    <property type="evidence" value="ECO:0007669"/>
    <property type="project" value="InterPro"/>
</dbReference>
<dbReference type="GO" id="GO:0015036">
    <property type="term" value="F:disulfide oxidoreductase activity"/>
    <property type="evidence" value="ECO:0007669"/>
    <property type="project" value="UniProtKB-UniRule"/>
</dbReference>
<dbReference type="GO" id="GO:0017004">
    <property type="term" value="P:cytochrome complex assembly"/>
    <property type="evidence" value="ECO:0007669"/>
    <property type="project" value="UniProtKB-UniRule"/>
</dbReference>
<dbReference type="CDD" id="cd02966">
    <property type="entry name" value="TlpA_like_family"/>
    <property type="match status" value="1"/>
</dbReference>
<dbReference type="Gene3D" id="3.40.30.10">
    <property type="entry name" value="Glutaredoxin"/>
    <property type="match status" value="1"/>
</dbReference>
<dbReference type="HAMAP" id="MF_01319">
    <property type="entry name" value="ResA"/>
    <property type="match status" value="1"/>
</dbReference>
<dbReference type="InterPro" id="IPR000866">
    <property type="entry name" value="AhpC/TSA"/>
</dbReference>
<dbReference type="InterPro" id="IPR023555">
    <property type="entry name" value="Thiol-dS_OxRdtase_ResA"/>
</dbReference>
<dbReference type="InterPro" id="IPR036249">
    <property type="entry name" value="Thioredoxin-like_sf"/>
</dbReference>
<dbReference type="InterPro" id="IPR017937">
    <property type="entry name" value="Thioredoxin_CS"/>
</dbReference>
<dbReference type="InterPro" id="IPR013766">
    <property type="entry name" value="Thioredoxin_domain"/>
</dbReference>
<dbReference type="InterPro" id="IPR050553">
    <property type="entry name" value="Thioredoxin_ResA/DsbE_sf"/>
</dbReference>
<dbReference type="NCBIfam" id="NF002854">
    <property type="entry name" value="PRK03147.1"/>
    <property type="match status" value="1"/>
</dbReference>
<dbReference type="PANTHER" id="PTHR42852">
    <property type="entry name" value="THIOL:DISULFIDE INTERCHANGE PROTEIN DSBE"/>
    <property type="match status" value="1"/>
</dbReference>
<dbReference type="PANTHER" id="PTHR42852:SF6">
    <property type="entry name" value="THIOL:DISULFIDE INTERCHANGE PROTEIN DSBE"/>
    <property type="match status" value="1"/>
</dbReference>
<dbReference type="Pfam" id="PF00578">
    <property type="entry name" value="AhpC-TSA"/>
    <property type="match status" value="1"/>
</dbReference>
<dbReference type="SUPFAM" id="SSF52833">
    <property type="entry name" value="Thioredoxin-like"/>
    <property type="match status" value="1"/>
</dbReference>
<dbReference type="PROSITE" id="PS00194">
    <property type="entry name" value="THIOREDOXIN_1"/>
    <property type="match status" value="1"/>
</dbReference>
<dbReference type="PROSITE" id="PS51352">
    <property type="entry name" value="THIOREDOXIN_2"/>
    <property type="match status" value="1"/>
</dbReference>
<evidence type="ECO:0000269" key="1">
    <source>
    </source>
</evidence>
<evidence type="ECO:0000305" key="2"/>
<evidence type="ECO:0007829" key="3">
    <source>
        <dbReference type="PDB" id="2F9S"/>
    </source>
</evidence>
<gene>
    <name type="primary">resA</name>
    <name type="synonym">ypxA</name>
    <name type="ordered locus">BSU23150</name>
</gene>
<protein>
    <recommendedName>
        <fullName>Thiol-disulfide oxidoreductase ResA</fullName>
    </recommendedName>
</protein>
<keyword id="KW-0002">3D-structure</keyword>
<keyword id="KW-1003">Cell membrane</keyword>
<keyword id="KW-0201">Cytochrome c-type biogenesis</keyword>
<keyword id="KW-1015">Disulfide bond</keyword>
<keyword id="KW-0472">Membrane</keyword>
<keyword id="KW-0560">Oxidoreductase</keyword>
<keyword id="KW-0676">Redox-active center</keyword>
<keyword id="KW-1185">Reference proteome</keyword>
<keyword id="KW-0735">Signal-anchor</keyword>
<keyword id="KW-0812">Transmembrane</keyword>
<keyword id="KW-1133">Transmembrane helix</keyword>
<accession>P35160</accession>
<organism>
    <name type="scientific">Bacillus subtilis (strain 168)</name>
    <dbReference type="NCBI Taxonomy" id="224308"/>
    <lineage>
        <taxon>Bacteria</taxon>
        <taxon>Bacillati</taxon>
        <taxon>Bacillota</taxon>
        <taxon>Bacilli</taxon>
        <taxon>Bacillales</taxon>
        <taxon>Bacillaceae</taxon>
        <taxon>Bacillus</taxon>
    </lineage>
</organism>
<comment type="function">
    <text evidence="1">Thiol-disulfide oxidoreductase which is required in disulfide reduction during c-type cytochrome synthesis. May accept reducing equivalents from CcdA, leading to breakage of disulfide bonds in apocytochrome c; following this reduction heme can be covalently attached. Does not play a role in sporulation.</text>
</comment>
<comment type="pathway">
    <text>Protein modification; cytochrome c assembly.</text>
</comment>
<comment type="interaction">
    <interactant intactId="EBI-15573707">
        <id>P35160</id>
    </interactant>
    <interactant intactId="EBI-15573689">
        <id>P24469</id>
        <label>cccA</label>
    </interactant>
    <organismsDiffer>false</organismsDiffer>
    <experiments>2</experiments>
</comment>
<comment type="subcellular location">
    <subcellularLocation>
        <location evidence="1">Cell membrane</location>
        <topology evidence="1">Single-pass type II membrane protein</topology>
    </subcellularLocation>
    <text>The thioredoxin-like motif is exposed on the outside of the membrane.</text>
</comment>
<comment type="similarity">
    <text evidence="2">Belongs to the thioredoxin family. ResA subfamily.</text>
</comment>
<comment type="sequence caution" evidence="2">
    <conflict type="frameshift">
        <sequence resource="EMBL-CDS" id="AAA67494"/>
    </conflict>
</comment>
<name>RESA_BACSU</name>
<reference key="1">
    <citation type="journal article" date="1993" name="Mol. Microbiol.">
        <title>The organization of the Bacillus subtilis 168 chromosome region between the spoVA and serA genetic loci, based on sequence data.</title>
        <authorList>
            <person name="Sorokin A.V."/>
            <person name="Zumstein E."/>
            <person name="Azevedo V."/>
            <person name="Ehrlich S.D."/>
            <person name="Serror P."/>
        </authorList>
    </citation>
    <scope>NUCLEOTIDE SEQUENCE [GENOMIC DNA]</scope>
    <source>
        <strain>168 / Marburg / ATCC 6051 / DSM 10 / JCM 1465 / NBRC 13719 / NCIMB 3610 / NRRL NRS-744 / VKM B-501</strain>
    </source>
</reference>
<reference key="2">
    <citation type="journal article" date="1997" name="Nature">
        <title>The complete genome sequence of the Gram-positive bacterium Bacillus subtilis.</title>
        <authorList>
            <person name="Kunst F."/>
            <person name="Ogasawara N."/>
            <person name="Moszer I."/>
            <person name="Albertini A.M."/>
            <person name="Alloni G."/>
            <person name="Azevedo V."/>
            <person name="Bertero M.G."/>
            <person name="Bessieres P."/>
            <person name="Bolotin A."/>
            <person name="Borchert S."/>
            <person name="Borriss R."/>
            <person name="Boursier L."/>
            <person name="Brans A."/>
            <person name="Braun M."/>
            <person name="Brignell S.C."/>
            <person name="Bron S."/>
            <person name="Brouillet S."/>
            <person name="Bruschi C.V."/>
            <person name="Caldwell B."/>
            <person name="Capuano V."/>
            <person name="Carter N.M."/>
            <person name="Choi S.-K."/>
            <person name="Codani J.-J."/>
            <person name="Connerton I.F."/>
            <person name="Cummings N.J."/>
            <person name="Daniel R.A."/>
            <person name="Denizot F."/>
            <person name="Devine K.M."/>
            <person name="Duesterhoeft A."/>
            <person name="Ehrlich S.D."/>
            <person name="Emmerson P.T."/>
            <person name="Entian K.-D."/>
            <person name="Errington J."/>
            <person name="Fabret C."/>
            <person name="Ferrari E."/>
            <person name="Foulger D."/>
            <person name="Fritz C."/>
            <person name="Fujita M."/>
            <person name="Fujita Y."/>
            <person name="Fuma S."/>
            <person name="Galizzi A."/>
            <person name="Galleron N."/>
            <person name="Ghim S.-Y."/>
            <person name="Glaser P."/>
            <person name="Goffeau A."/>
            <person name="Golightly E.J."/>
            <person name="Grandi G."/>
            <person name="Guiseppi G."/>
            <person name="Guy B.J."/>
            <person name="Haga K."/>
            <person name="Haiech J."/>
            <person name="Harwood C.R."/>
            <person name="Henaut A."/>
            <person name="Hilbert H."/>
            <person name="Holsappel S."/>
            <person name="Hosono S."/>
            <person name="Hullo M.-F."/>
            <person name="Itaya M."/>
            <person name="Jones L.-M."/>
            <person name="Joris B."/>
            <person name="Karamata D."/>
            <person name="Kasahara Y."/>
            <person name="Klaerr-Blanchard M."/>
            <person name="Klein C."/>
            <person name="Kobayashi Y."/>
            <person name="Koetter P."/>
            <person name="Koningstein G."/>
            <person name="Krogh S."/>
            <person name="Kumano M."/>
            <person name="Kurita K."/>
            <person name="Lapidus A."/>
            <person name="Lardinois S."/>
            <person name="Lauber J."/>
            <person name="Lazarevic V."/>
            <person name="Lee S.-M."/>
            <person name="Levine A."/>
            <person name="Liu H."/>
            <person name="Masuda S."/>
            <person name="Mauel C."/>
            <person name="Medigue C."/>
            <person name="Medina N."/>
            <person name="Mellado R.P."/>
            <person name="Mizuno M."/>
            <person name="Moestl D."/>
            <person name="Nakai S."/>
            <person name="Noback M."/>
            <person name="Noone D."/>
            <person name="O'Reilly M."/>
            <person name="Ogawa K."/>
            <person name="Ogiwara A."/>
            <person name="Oudega B."/>
            <person name="Park S.-H."/>
            <person name="Parro V."/>
            <person name="Pohl T.M."/>
            <person name="Portetelle D."/>
            <person name="Porwollik S."/>
            <person name="Prescott A.M."/>
            <person name="Presecan E."/>
            <person name="Pujic P."/>
            <person name="Purnelle B."/>
            <person name="Rapoport G."/>
            <person name="Rey M."/>
            <person name="Reynolds S."/>
            <person name="Rieger M."/>
            <person name="Rivolta C."/>
            <person name="Rocha E."/>
            <person name="Roche B."/>
            <person name="Rose M."/>
            <person name="Sadaie Y."/>
            <person name="Sato T."/>
            <person name="Scanlan E."/>
            <person name="Schleich S."/>
            <person name="Schroeter R."/>
            <person name="Scoffone F."/>
            <person name="Sekiguchi J."/>
            <person name="Sekowska A."/>
            <person name="Seror S.J."/>
            <person name="Serror P."/>
            <person name="Shin B.-S."/>
            <person name="Soldo B."/>
            <person name="Sorokin A."/>
            <person name="Tacconi E."/>
            <person name="Takagi T."/>
            <person name="Takahashi H."/>
            <person name="Takemaru K."/>
            <person name="Takeuchi M."/>
            <person name="Tamakoshi A."/>
            <person name="Tanaka T."/>
            <person name="Terpstra P."/>
            <person name="Tognoni A."/>
            <person name="Tosato V."/>
            <person name="Uchiyama S."/>
            <person name="Vandenbol M."/>
            <person name="Vannier F."/>
            <person name="Vassarotti A."/>
            <person name="Viari A."/>
            <person name="Wambutt R."/>
            <person name="Wedler E."/>
            <person name="Wedler H."/>
            <person name="Weitzenegger T."/>
            <person name="Winters P."/>
            <person name="Wipat A."/>
            <person name="Yamamoto H."/>
            <person name="Yamane K."/>
            <person name="Yasumoto K."/>
            <person name="Yata K."/>
            <person name="Yoshida K."/>
            <person name="Yoshikawa H.-F."/>
            <person name="Zumstein E."/>
            <person name="Yoshikawa H."/>
            <person name="Danchin A."/>
        </authorList>
    </citation>
    <scope>NUCLEOTIDE SEQUENCE [LARGE SCALE GENOMIC DNA]</scope>
    <source>
        <strain>168</strain>
    </source>
</reference>
<reference key="3">
    <citation type="journal article" date="2009" name="Microbiology">
        <title>From a consortium sequence to a unified sequence: the Bacillus subtilis 168 reference genome a decade later.</title>
        <authorList>
            <person name="Barbe V."/>
            <person name="Cruveiller S."/>
            <person name="Kunst F."/>
            <person name="Lenoble P."/>
            <person name="Meurice G."/>
            <person name="Sekowska A."/>
            <person name="Vallenet D."/>
            <person name="Wang T."/>
            <person name="Moszer I."/>
            <person name="Medigue C."/>
            <person name="Danchin A."/>
        </authorList>
    </citation>
    <scope>SEQUENCE REVISION</scope>
</reference>
<reference key="4">
    <citation type="journal article" date="1996" name="J. Bacteriol.">
        <title>Regulators of aerobic and anaerobic respiration in Bacillus subtilis.</title>
        <authorList>
            <person name="Sun G."/>
            <person name="Sharkova E."/>
            <person name="Chesnut R."/>
            <person name="Birkey S."/>
            <person name="Duggan M.F."/>
            <person name="Sorokin A.V."/>
            <person name="Pujic P."/>
            <person name="Ehrlich S.D."/>
            <person name="Hulett F.M."/>
        </authorList>
    </citation>
    <scope>GENE NAME</scope>
</reference>
<reference key="5">
    <citation type="journal article" date="2003" name="J. Biol. Chem.">
        <title>Bacillus subtilis ResA is a thiol-disulfide oxidoreductase involved in cytochrome c synthesis.</title>
        <authorList>
            <person name="Erlendsson L.S."/>
            <person name="Acheson R.M."/>
            <person name="Hederstedt L."/>
            <person name="Le Brun N.E."/>
        </authorList>
    </citation>
    <scope>DETECTION OF FRAMESHIFT</scope>
    <scope>FUNCTION</scope>
    <scope>SUBCELLULAR LOCATION</scope>
    <source>
        <strain>168 / BGSC1A1</strain>
    </source>
</reference>
<reference key="6">
    <citation type="journal article" date="2004" name="J. Biol. Chem.">
        <title>Structural basis of redox-coupled protein substrate selection by the cytochrome c biosynthesis protein ResA.</title>
        <authorList>
            <person name="Crow A."/>
            <person name="Acheson R.M."/>
            <person name="Le Brun N.E."/>
            <person name="Oubrie A."/>
        </authorList>
    </citation>
    <scope>X-RAY CRYSTALLOGRAPHY (1.5 ANGSTROMS) OF 37-179 IN THE OXIDIZED AND REDUCED STATES</scope>
    <source>
        <strain>168 / BGSC1A1</strain>
    </source>
</reference>
<reference key="7">
    <citation type="journal article" date="2006" name="J. Biol. Chem.">
        <title>Molecular basis for specificity of the extracytoplasmic thioredoxin ResA.</title>
        <authorList>
            <person name="Lewin A."/>
            <person name="Crow A."/>
            <person name="Oubrie A."/>
            <person name="Le Brun N.E."/>
        </authorList>
    </citation>
    <scope>X-RAY CRYSTALLOGRAPHY (1.95 ANGSTROMS) OF 37-179 WITH CYSTEINE MUTATIONS</scope>
    <scope>CRYSTALLIZED AT HIGH PH</scope>
    <source>
        <strain>168 / BGSC1A1</strain>
    </source>
</reference>
<reference key="8">
    <citation type="journal article" date="2006" name="Proc. Natl. Acad. Sci. U.S.A.">
        <title>Mechanism of substrate specificity in Bacillus subtilis ResA, a thioredoxin-like protein involved in cytochrome c maturation.</title>
        <authorList>
            <person name="Colbert C.L."/>
            <person name="Wu Q."/>
            <person name="Erbel P.J.A."/>
            <person name="Gardner K.H."/>
            <person name="Deisenhofer J."/>
        </authorList>
    </citation>
    <scope>X-RAY CRYSTALLOGRAPHY (1.4 ANGSTROMS) OF 37-179</scope>
    <scope>NMR</scope>
    <source>
        <strain>168 / BGSC1A1</strain>
    </source>
</reference>
<feature type="chain" id="PRO_0000120149" description="Thiol-disulfide oxidoreductase ResA">
    <location>
        <begin position="1"/>
        <end position="179"/>
    </location>
</feature>
<feature type="transmembrane region" description="Helical; Signal-anchor for type II membrane protein" evidence="2">
    <location>
        <begin position="11"/>
        <end position="30"/>
    </location>
</feature>
<feature type="domain" description="Thioredoxin">
    <location>
        <begin position="36"/>
        <end position="174"/>
    </location>
</feature>
<feature type="disulfide bond" description="Redox-active">
    <location>
        <begin position="74"/>
        <end position="77"/>
    </location>
</feature>
<feature type="strand" evidence="3">
    <location>
        <begin position="46"/>
        <end position="48"/>
    </location>
</feature>
<feature type="strand" evidence="3">
    <location>
        <begin position="54"/>
        <end position="56"/>
    </location>
</feature>
<feature type="helix" evidence="3">
    <location>
        <begin position="57"/>
        <end position="60"/>
    </location>
</feature>
<feature type="strand" evidence="3">
    <location>
        <begin position="63"/>
        <end position="70"/>
    </location>
</feature>
<feature type="helix" evidence="3">
    <location>
        <begin position="75"/>
        <end position="91"/>
    </location>
</feature>
<feature type="helix" evidence="3">
    <location>
        <begin position="92"/>
        <end position="94"/>
    </location>
</feature>
<feature type="strand" evidence="3">
    <location>
        <begin position="96"/>
        <end position="104"/>
    </location>
</feature>
<feature type="helix" evidence="3">
    <location>
        <begin position="107"/>
        <end position="117"/>
    </location>
</feature>
<feature type="strand" evidence="3">
    <location>
        <begin position="123"/>
        <end position="126"/>
    </location>
</feature>
<feature type="helix" evidence="3">
    <location>
        <begin position="130"/>
        <end position="134"/>
    </location>
</feature>
<feature type="strand" evidence="3">
    <location>
        <begin position="142"/>
        <end position="146"/>
    </location>
</feature>
<feature type="strand" evidence="3">
    <location>
        <begin position="150"/>
        <end position="158"/>
    </location>
</feature>
<feature type="helix" evidence="3">
    <location>
        <begin position="162"/>
        <end position="172"/>
    </location>
</feature>